<reference key="1">
    <citation type="submission" date="1998-01" db="EMBL/GenBank/DDBJ databases">
        <authorList>
            <person name="Okresz L."/>
        </authorList>
    </citation>
    <scope>NUCLEOTIDE SEQUENCE [MRNA]</scope>
</reference>
<reference key="2">
    <citation type="journal article" date="2005" name="Science">
        <title>The transcriptional landscape of the mammalian genome.</title>
        <authorList>
            <person name="Carninci P."/>
            <person name="Kasukawa T."/>
            <person name="Katayama S."/>
            <person name="Gough J."/>
            <person name="Frith M.C."/>
            <person name="Maeda N."/>
            <person name="Oyama R."/>
            <person name="Ravasi T."/>
            <person name="Lenhard B."/>
            <person name="Wells C."/>
            <person name="Kodzius R."/>
            <person name="Shimokawa K."/>
            <person name="Bajic V.B."/>
            <person name="Brenner S.E."/>
            <person name="Batalov S."/>
            <person name="Forrest A.R."/>
            <person name="Zavolan M."/>
            <person name="Davis M.J."/>
            <person name="Wilming L.G."/>
            <person name="Aidinis V."/>
            <person name="Allen J.E."/>
            <person name="Ambesi-Impiombato A."/>
            <person name="Apweiler R."/>
            <person name="Aturaliya R.N."/>
            <person name="Bailey T.L."/>
            <person name="Bansal M."/>
            <person name="Baxter L."/>
            <person name="Beisel K.W."/>
            <person name="Bersano T."/>
            <person name="Bono H."/>
            <person name="Chalk A.M."/>
            <person name="Chiu K.P."/>
            <person name="Choudhary V."/>
            <person name="Christoffels A."/>
            <person name="Clutterbuck D.R."/>
            <person name="Crowe M.L."/>
            <person name="Dalla E."/>
            <person name="Dalrymple B.P."/>
            <person name="de Bono B."/>
            <person name="Della Gatta G."/>
            <person name="di Bernardo D."/>
            <person name="Down T."/>
            <person name="Engstrom P."/>
            <person name="Fagiolini M."/>
            <person name="Faulkner G."/>
            <person name="Fletcher C.F."/>
            <person name="Fukushima T."/>
            <person name="Furuno M."/>
            <person name="Futaki S."/>
            <person name="Gariboldi M."/>
            <person name="Georgii-Hemming P."/>
            <person name="Gingeras T.R."/>
            <person name="Gojobori T."/>
            <person name="Green R.E."/>
            <person name="Gustincich S."/>
            <person name="Harbers M."/>
            <person name="Hayashi Y."/>
            <person name="Hensch T.K."/>
            <person name="Hirokawa N."/>
            <person name="Hill D."/>
            <person name="Huminiecki L."/>
            <person name="Iacono M."/>
            <person name="Ikeo K."/>
            <person name="Iwama A."/>
            <person name="Ishikawa T."/>
            <person name="Jakt M."/>
            <person name="Kanapin A."/>
            <person name="Katoh M."/>
            <person name="Kawasawa Y."/>
            <person name="Kelso J."/>
            <person name="Kitamura H."/>
            <person name="Kitano H."/>
            <person name="Kollias G."/>
            <person name="Krishnan S.P."/>
            <person name="Kruger A."/>
            <person name="Kummerfeld S.K."/>
            <person name="Kurochkin I.V."/>
            <person name="Lareau L.F."/>
            <person name="Lazarevic D."/>
            <person name="Lipovich L."/>
            <person name="Liu J."/>
            <person name="Liuni S."/>
            <person name="McWilliam S."/>
            <person name="Madan Babu M."/>
            <person name="Madera M."/>
            <person name="Marchionni L."/>
            <person name="Matsuda H."/>
            <person name="Matsuzawa S."/>
            <person name="Miki H."/>
            <person name="Mignone F."/>
            <person name="Miyake S."/>
            <person name="Morris K."/>
            <person name="Mottagui-Tabar S."/>
            <person name="Mulder N."/>
            <person name="Nakano N."/>
            <person name="Nakauchi H."/>
            <person name="Ng P."/>
            <person name="Nilsson R."/>
            <person name="Nishiguchi S."/>
            <person name="Nishikawa S."/>
            <person name="Nori F."/>
            <person name="Ohara O."/>
            <person name="Okazaki Y."/>
            <person name="Orlando V."/>
            <person name="Pang K.C."/>
            <person name="Pavan W.J."/>
            <person name="Pavesi G."/>
            <person name="Pesole G."/>
            <person name="Petrovsky N."/>
            <person name="Piazza S."/>
            <person name="Reed J."/>
            <person name="Reid J.F."/>
            <person name="Ring B.Z."/>
            <person name="Ringwald M."/>
            <person name="Rost B."/>
            <person name="Ruan Y."/>
            <person name="Salzberg S.L."/>
            <person name="Sandelin A."/>
            <person name="Schneider C."/>
            <person name="Schoenbach C."/>
            <person name="Sekiguchi K."/>
            <person name="Semple C.A."/>
            <person name="Seno S."/>
            <person name="Sessa L."/>
            <person name="Sheng Y."/>
            <person name="Shibata Y."/>
            <person name="Shimada H."/>
            <person name="Shimada K."/>
            <person name="Silva D."/>
            <person name="Sinclair B."/>
            <person name="Sperling S."/>
            <person name="Stupka E."/>
            <person name="Sugiura K."/>
            <person name="Sultana R."/>
            <person name="Takenaka Y."/>
            <person name="Taki K."/>
            <person name="Tammoja K."/>
            <person name="Tan S.L."/>
            <person name="Tang S."/>
            <person name="Taylor M.S."/>
            <person name="Tegner J."/>
            <person name="Teichmann S.A."/>
            <person name="Ueda H.R."/>
            <person name="van Nimwegen E."/>
            <person name="Verardo R."/>
            <person name="Wei C.L."/>
            <person name="Yagi K."/>
            <person name="Yamanishi H."/>
            <person name="Zabarovsky E."/>
            <person name="Zhu S."/>
            <person name="Zimmer A."/>
            <person name="Hide W."/>
            <person name="Bult C."/>
            <person name="Grimmond S.M."/>
            <person name="Teasdale R.D."/>
            <person name="Liu E.T."/>
            <person name="Brusic V."/>
            <person name="Quackenbush J."/>
            <person name="Wahlestedt C."/>
            <person name="Mattick J.S."/>
            <person name="Hume D.A."/>
            <person name="Kai C."/>
            <person name="Sasaki D."/>
            <person name="Tomaru Y."/>
            <person name="Fukuda S."/>
            <person name="Kanamori-Katayama M."/>
            <person name="Suzuki M."/>
            <person name="Aoki J."/>
            <person name="Arakawa T."/>
            <person name="Iida J."/>
            <person name="Imamura K."/>
            <person name="Itoh M."/>
            <person name="Kato T."/>
            <person name="Kawaji H."/>
            <person name="Kawagashira N."/>
            <person name="Kawashima T."/>
            <person name="Kojima M."/>
            <person name="Kondo S."/>
            <person name="Konno H."/>
            <person name="Nakano K."/>
            <person name="Ninomiya N."/>
            <person name="Nishio T."/>
            <person name="Okada M."/>
            <person name="Plessy C."/>
            <person name="Shibata K."/>
            <person name="Shiraki T."/>
            <person name="Suzuki S."/>
            <person name="Tagami M."/>
            <person name="Waki K."/>
            <person name="Watahiki A."/>
            <person name="Okamura-Oho Y."/>
            <person name="Suzuki H."/>
            <person name="Kawai J."/>
            <person name="Hayashizaki Y."/>
        </authorList>
    </citation>
    <scope>NUCLEOTIDE SEQUENCE [LARGE SCALE MRNA]</scope>
    <source>
        <strain>C57BL/6J</strain>
        <tissue>Embryo</tissue>
        <tissue>Testis</tissue>
    </source>
</reference>
<reference key="3">
    <citation type="journal article" date="2004" name="Genome Res.">
        <title>The status, quality, and expansion of the NIH full-length cDNA project: the Mammalian Gene Collection (MGC).</title>
        <authorList>
            <consortium name="The MGC Project Team"/>
        </authorList>
    </citation>
    <scope>NUCLEOTIDE SEQUENCE [LARGE SCALE MRNA]</scope>
    <source>
        <strain>C3H/He</strain>
        <tissue>Mammary tumor</tissue>
        <tissue>Mesenchymal cell</tissue>
    </source>
</reference>
<reference key="4">
    <citation type="journal article" date="2010" name="Cell">
        <title>A tissue-specific atlas of mouse protein phosphorylation and expression.</title>
        <authorList>
            <person name="Huttlin E.L."/>
            <person name="Jedrychowski M.P."/>
            <person name="Elias J.E."/>
            <person name="Goswami T."/>
            <person name="Rad R."/>
            <person name="Beausoleil S.A."/>
            <person name="Villen J."/>
            <person name="Haas W."/>
            <person name="Sowa M.E."/>
            <person name="Gygi S.P."/>
        </authorList>
    </citation>
    <scope>IDENTIFICATION BY MASS SPECTROMETRY [LARGE SCALE ANALYSIS]</scope>
    <source>
        <tissue>Spleen</tissue>
        <tissue>Testis</tissue>
    </source>
</reference>
<proteinExistence type="evidence at protein level"/>
<organism>
    <name type="scientific">Mus musculus</name>
    <name type="common">Mouse</name>
    <dbReference type="NCBI Taxonomy" id="10090"/>
    <lineage>
        <taxon>Eukaryota</taxon>
        <taxon>Metazoa</taxon>
        <taxon>Chordata</taxon>
        <taxon>Craniata</taxon>
        <taxon>Vertebrata</taxon>
        <taxon>Euteleostomi</taxon>
        <taxon>Mammalia</taxon>
        <taxon>Eutheria</taxon>
        <taxon>Euarchontoglires</taxon>
        <taxon>Glires</taxon>
        <taxon>Rodentia</taxon>
        <taxon>Myomorpha</taxon>
        <taxon>Muroidea</taxon>
        <taxon>Muridae</taxon>
        <taxon>Murinae</taxon>
        <taxon>Mus</taxon>
        <taxon>Mus</taxon>
    </lineage>
</organism>
<comment type="function">
    <text evidence="1">Involved in pre-mRNA splicing as component of the spliceosome. Component of the PRP19-CDC5L complex that forms an integral part of the spliceosome and is required for activating pre-mRNA splicing. As a component of the minor spliceosome, involved in the splicing of U12-type introns in pre-mRNAs (By similarity).</text>
</comment>
<comment type="subunit">
    <text evidence="1">Identified in the spliceosome C complex. Component of the PRP19-CDC5L splicing complex composed of a core complex comprising a homotetramer of PRPF19, CDC5L, PLRG1 and BCAS2, and at least three less stably associated proteins CTNNBL1, CWC15 and HSPA8. Interacts (via its WD40 repeat domain) directly with CDC5L (via its C-terminal); the interaction is required for mRNA splicing but not for spliceosome assembly. Component of the minor spliceosome, which splices U12-type introns. Within this complex, interacts with CRIPT (By similarity). Also interacts directly in the complex with BCAS2 and PRPF19. Interacts with USB1 (By similarity).</text>
</comment>
<comment type="subcellular location">
    <subcellularLocation>
        <location evidence="1">Nucleus</location>
    </subcellularLocation>
    <subcellularLocation>
        <location evidence="1">Nucleus speckle</location>
    </subcellularLocation>
</comment>
<comment type="similarity">
    <text evidence="3">Belongs to the WD repeat PRL1/PRL2 family.</text>
</comment>
<gene>
    <name type="primary">Plrg1</name>
</gene>
<feature type="chain" id="PRO_0000051134" description="Pleiotropic regulator 1">
    <location>
        <begin position="1"/>
        <end position="513"/>
    </location>
</feature>
<feature type="repeat" description="WD 1">
    <location>
        <begin position="201"/>
        <end position="240"/>
    </location>
</feature>
<feature type="repeat" description="WD 2">
    <location>
        <begin position="243"/>
        <end position="282"/>
    </location>
</feature>
<feature type="repeat" description="WD 3">
    <location>
        <begin position="285"/>
        <end position="324"/>
    </location>
</feature>
<feature type="repeat" description="WD 4">
    <location>
        <begin position="327"/>
        <end position="366"/>
    </location>
</feature>
<feature type="repeat" description="WD 5">
    <location>
        <begin position="369"/>
        <end position="409"/>
    </location>
</feature>
<feature type="repeat" description="WD 6">
    <location>
        <begin position="410"/>
        <end position="448"/>
    </location>
</feature>
<feature type="repeat" description="WD 7">
    <location>
        <begin position="459"/>
        <end position="498"/>
    </location>
</feature>
<feature type="region of interest" description="Disordered" evidence="2">
    <location>
        <begin position="60"/>
        <end position="79"/>
    </location>
</feature>
<feature type="region of interest" description="Disordered" evidence="2">
    <location>
        <begin position="136"/>
        <end position="160"/>
    </location>
</feature>
<feature type="modified residue" description="N-acetylmethionine" evidence="1">
    <location>
        <position position="1"/>
    </location>
</feature>
<feature type="modified residue" description="Phosphoserine" evidence="1">
    <location>
        <position position="119"/>
    </location>
</feature>
<feature type="modified residue" description="Phosphoserine" evidence="1">
    <location>
        <position position="200"/>
    </location>
</feature>
<feature type="modified residue" description="Phosphoserine" evidence="1">
    <location>
        <position position="390"/>
    </location>
</feature>
<feature type="sequence conflict" description="In Ref. 1; AAC04388." evidence="3" ref="1">
    <original>A</original>
    <variation>P</variation>
    <location>
        <position position="102"/>
    </location>
</feature>
<keyword id="KW-0007">Acetylation</keyword>
<keyword id="KW-0507">mRNA processing</keyword>
<keyword id="KW-0508">mRNA splicing</keyword>
<keyword id="KW-0539">Nucleus</keyword>
<keyword id="KW-0597">Phosphoprotein</keyword>
<keyword id="KW-1185">Reference proteome</keyword>
<keyword id="KW-0677">Repeat</keyword>
<keyword id="KW-0747">Spliceosome</keyword>
<keyword id="KW-0853">WD repeat</keyword>
<dbReference type="EMBL" id="AF044334">
    <property type="protein sequence ID" value="AAC04388.1"/>
    <property type="molecule type" value="mRNA"/>
</dbReference>
<dbReference type="EMBL" id="AK075993">
    <property type="protein sequence ID" value="BAC36104.1"/>
    <property type="molecule type" value="mRNA"/>
</dbReference>
<dbReference type="EMBL" id="AK076007">
    <property type="protein sequence ID" value="BAC36115.1"/>
    <property type="molecule type" value="mRNA"/>
</dbReference>
<dbReference type="EMBL" id="AK077197">
    <property type="protein sequence ID" value="BAC36675.1"/>
    <property type="molecule type" value="mRNA"/>
</dbReference>
<dbReference type="EMBL" id="BC006750">
    <property type="protein sequence ID" value="AAH06750.1"/>
    <property type="molecule type" value="mRNA"/>
</dbReference>
<dbReference type="EMBL" id="BC052895">
    <property type="status" value="NOT_ANNOTATED_CDS"/>
    <property type="molecule type" value="mRNA"/>
</dbReference>
<dbReference type="CCDS" id="CCDS17433.1"/>
<dbReference type="RefSeq" id="NP_058064.2">
    <property type="nucleotide sequence ID" value="NM_016784.3"/>
</dbReference>
<dbReference type="SMR" id="Q922V4"/>
<dbReference type="BioGRID" id="207280">
    <property type="interactions" value="40"/>
</dbReference>
<dbReference type="ComplexPortal" id="CPX-5825">
    <property type="entry name" value="PRP19-CDC5L complex"/>
</dbReference>
<dbReference type="FunCoup" id="Q922V4">
    <property type="interactions" value="3021"/>
</dbReference>
<dbReference type="IntAct" id="Q922V4">
    <property type="interactions" value="3"/>
</dbReference>
<dbReference type="MINT" id="Q922V4"/>
<dbReference type="STRING" id="10090.ENSMUSP00000114968"/>
<dbReference type="GlyGen" id="Q922V4">
    <property type="glycosylation" value="3 sites, 1 N-linked glycan (1 site), 1 O-linked glycan (2 sites)"/>
</dbReference>
<dbReference type="iPTMnet" id="Q922V4"/>
<dbReference type="PhosphoSitePlus" id="Q922V4"/>
<dbReference type="SwissPalm" id="Q922V4"/>
<dbReference type="PaxDb" id="10090-ENSMUSP00000114968"/>
<dbReference type="PeptideAtlas" id="Q922V4"/>
<dbReference type="ProteomicsDB" id="289548"/>
<dbReference type="Pumba" id="Q922V4"/>
<dbReference type="Antibodypedia" id="16702">
    <property type="antibodies" value="248 antibodies from 29 providers"/>
</dbReference>
<dbReference type="DNASU" id="53317"/>
<dbReference type="Ensembl" id="ENSMUST00000150268.8">
    <property type="protein sequence ID" value="ENSMUSP00000114968.2"/>
    <property type="gene ID" value="ENSMUSG00000027998.12"/>
</dbReference>
<dbReference type="GeneID" id="53317"/>
<dbReference type="KEGG" id="mmu:53317"/>
<dbReference type="UCSC" id="uc008ppi.1">
    <property type="organism name" value="mouse"/>
</dbReference>
<dbReference type="AGR" id="MGI:1858197"/>
<dbReference type="CTD" id="5356"/>
<dbReference type="MGI" id="MGI:1858197">
    <property type="gene designation" value="Plrg1"/>
</dbReference>
<dbReference type="VEuPathDB" id="HostDB:ENSMUSG00000027998"/>
<dbReference type="eggNOG" id="KOG0285">
    <property type="taxonomic scope" value="Eukaryota"/>
</dbReference>
<dbReference type="GeneTree" id="ENSGT00940000155316"/>
<dbReference type="InParanoid" id="Q922V4"/>
<dbReference type="OMA" id="FAMCFDQ"/>
<dbReference type="OrthoDB" id="10256122at2759"/>
<dbReference type="PhylomeDB" id="Q922V4"/>
<dbReference type="TreeFam" id="TF105684"/>
<dbReference type="Reactome" id="R-MMU-72163">
    <property type="pathway name" value="mRNA Splicing - Major Pathway"/>
</dbReference>
<dbReference type="BioGRID-ORCS" id="53317">
    <property type="hits" value="26 hits in 78 CRISPR screens"/>
</dbReference>
<dbReference type="PRO" id="PR:Q922V4"/>
<dbReference type="Proteomes" id="UP000000589">
    <property type="component" value="Chromosome 3"/>
</dbReference>
<dbReference type="RNAct" id="Q922V4">
    <property type="molecule type" value="protein"/>
</dbReference>
<dbReference type="Bgee" id="ENSMUSG00000027998">
    <property type="expression patterns" value="Expressed in primitive streak and 268 other cell types or tissues"/>
</dbReference>
<dbReference type="ExpressionAtlas" id="Q922V4">
    <property type="expression patterns" value="baseline and differential"/>
</dbReference>
<dbReference type="GO" id="GO:0005662">
    <property type="term" value="C:DNA replication factor A complex"/>
    <property type="evidence" value="ECO:0007669"/>
    <property type="project" value="Ensembl"/>
</dbReference>
<dbReference type="GO" id="GO:0001650">
    <property type="term" value="C:fibrillar center"/>
    <property type="evidence" value="ECO:0007669"/>
    <property type="project" value="Ensembl"/>
</dbReference>
<dbReference type="GO" id="GO:0031965">
    <property type="term" value="C:nuclear membrane"/>
    <property type="evidence" value="ECO:0007669"/>
    <property type="project" value="Ensembl"/>
</dbReference>
<dbReference type="GO" id="GO:0016607">
    <property type="term" value="C:nuclear speck"/>
    <property type="evidence" value="ECO:0007669"/>
    <property type="project" value="UniProtKB-SubCell"/>
</dbReference>
<dbReference type="GO" id="GO:0005634">
    <property type="term" value="C:nucleus"/>
    <property type="evidence" value="ECO:0000250"/>
    <property type="project" value="UniProtKB"/>
</dbReference>
<dbReference type="GO" id="GO:0000974">
    <property type="term" value="C:Prp19 complex"/>
    <property type="evidence" value="ECO:0000266"/>
    <property type="project" value="ComplexPortal"/>
</dbReference>
<dbReference type="GO" id="GO:0005681">
    <property type="term" value="C:spliceosomal complex"/>
    <property type="evidence" value="ECO:0000266"/>
    <property type="project" value="ComplexPortal"/>
</dbReference>
<dbReference type="GO" id="GO:0071007">
    <property type="term" value="C:U2-type catalytic step 2 spliceosome"/>
    <property type="evidence" value="ECO:0000250"/>
    <property type="project" value="UniProtKB"/>
</dbReference>
<dbReference type="GO" id="GO:0000398">
    <property type="term" value="P:mRNA splicing, via spliceosome"/>
    <property type="evidence" value="ECO:0000250"/>
    <property type="project" value="UniProtKB"/>
</dbReference>
<dbReference type="GO" id="GO:1900087">
    <property type="term" value="P:positive regulation of G1/S transition of mitotic cell cycle"/>
    <property type="evidence" value="ECO:0000315"/>
    <property type="project" value="MGI"/>
</dbReference>
<dbReference type="GO" id="GO:0034504">
    <property type="term" value="P:protein localization to nucleus"/>
    <property type="evidence" value="ECO:0000315"/>
    <property type="project" value="MGI"/>
</dbReference>
<dbReference type="CDD" id="cd00200">
    <property type="entry name" value="WD40"/>
    <property type="match status" value="1"/>
</dbReference>
<dbReference type="FunFam" id="2.130.10.10:FF:000012">
    <property type="entry name" value="Putative pleiotropic regulator 1"/>
    <property type="match status" value="1"/>
</dbReference>
<dbReference type="Gene3D" id="2.130.10.10">
    <property type="entry name" value="YVTN repeat-like/Quinoprotein amine dehydrogenase"/>
    <property type="match status" value="1"/>
</dbReference>
<dbReference type="InterPro" id="IPR020472">
    <property type="entry name" value="G-protein_beta_WD-40_rep"/>
</dbReference>
<dbReference type="InterPro" id="IPR045241">
    <property type="entry name" value="Prp46/PLRG1-like"/>
</dbReference>
<dbReference type="InterPro" id="IPR015943">
    <property type="entry name" value="WD40/YVTN_repeat-like_dom_sf"/>
</dbReference>
<dbReference type="InterPro" id="IPR019775">
    <property type="entry name" value="WD40_repeat_CS"/>
</dbReference>
<dbReference type="InterPro" id="IPR036322">
    <property type="entry name" value="WD40_repeat_dom_sf"/>
</dbReference>
<dbReference type="InterPro" id="IPR001680">
    <property type="entry name" value="WD40_rpt"/>
</dbReference>
<dbReference type="PANTHER" id="PTHR19923:SF0">
    <property type="entry name" value="PLEIOTROPIC REGULATOR 1"/>
    <property type="match status" value="1"/>
</dbReference>
<dbReference type="PANTHER" id="PTHR19923">
    <property type="entry name" value="WD40 REPEAT PROTEINPRL1/PRL2-RELATED"/>
    <property type="match status" value="1"/>
</dbReference>
<dbReference type="Pfam" id="PF00400">
    <property type="entry name" value="WD40"/>
    <property type="match status" value="6"/>
</dbReference>
<dbReference type="PRINTS" id="PR00320">
    <property type="entry name" value="GPROTEINBRPT"/>
</dbReference>
<dbReference type="SMART" id="SM00320">
    <property type="entry name" value="WD40"/>
    <property type="match status" value="7"/>
</dbReference>
<dbReference type="SUPFAM" id="SSF50978">
    <property type="entry name" value="WD40 repeat-like"/>
    <property type="match status" value="1"/>
</dbReference>
<dbReference type="PROSITE" id="PS00678">
    <property type="entry name" value="WD_REPEATS_1"/>
    <property type="match status" value="2"/>
</dbReference>
<dbReference type="PROSITE" id="PS50082">
    <property type="entry name" value="WD_REPEATS_2"/>
    <property type="match status" value="5"/>
</dbReference>
<dbReference type="PROSITE" id="PS50294">
    <property type="entry name" value="WD_REPEATS_REGION"/>
    <property type="match status" value="1"/>
</dbReference>
<evidence type="ECO:0000250" key="1">
    <source>
        <dbReference type="UniProtKB" id="O43660"/>
    </source>
</evidence>
<evidence type="ECO:0000256" key="2">
    <source>
        <dbReference type="SAM" id="MobiDB-lite"/>
    </source>
</evidence>
<evidence type="ECO:0000305" key="3"/>
<name>PLRG1_MOUSE</name>
<protein>
    <recommendedName>
        <fullName>Pleiotropic regulator 1</fullName>
    </recommendedName>
</protein>
<accession>Q922V4</accession>
<accession>O55039</accession>
<sequence>MVEEVQKHSVHTLVFRSLKRTHDMFVADNGKPVPLDEESHKRKMAIKLRNEYGPVLHMPTSKENLKEKGPQNATDSYPHKQYPANQGQDVEYLVTGTHPYPAGPGVALTADTKIQRMPSESAAQSLAVALPSQTRVDANRTGPAGSEYRHPGASDRSQPTAMNSIMETGNTKNSALMAKKAPTMPKPQWHPPWKLYRVISGHLGWVRCIAVEPGNQWFVTGSADRTIKIWDLASGKLKLSLTGHISTVRGVIVSTRSPYLFSCGEDKQVKCWDLEYNKVIRHYHGHLSAVYGLDLHPTLDVLVTCSRDSTARIWDVRTKASVHTLSGHTNAVATVRCQAAEPQIITGSHDTTIRLWDLVAGKTRVTLTNHKKSVRAVVLHPLLYTFASGSPDNIKQWKFPDGGFIQNLSGHNAIINTLAVNADGVLVSGADNGTMHLWDWRTGYNFQRVHAAVQPGSLDSESGIFACAFDRSESRLLTAEADKTIKVYREDETATEETHPVSWKPEIIKRKRF</sequence>